<comment type="function">
    <text evidence="1">Presumably involved in the processing and regular turnover of intracellular proteins. Catalyzes the removal of unsubstituted N-terminal amino acids from various peptides.</text>
</comment>
<comment type="catalytic activity">
    <reaction evidence="1">
        <text>Release of an N-terminal amino acid, Xaa-|-Yaa-, in which Xaa is preferably Leu, but may be other amino acids including Pro although not Arg or Lys, and Yaa may be Pro. Amino acid amides and methyl esters are also readily hydrolyzed, but rates on arylamides are exceedingly low.</text>
        <dbReference type="EC" id="3.4.11.1"/>
    </reaction>
</comment>
<comment type="catalytic activity">
    <reaction evidence="1">
        <text>Release of an N-terminal amino acid, preferentially leucine, but not glutamic or aspartic acids.</text>
        <dbReference type="EC" id="3.4.11.10"/>
    </reaction>
</comment>
<comment type="cofactor">
    <cofactor evidence="1">
        <name>Mn(2+)</name>
        <dbReference type="ChEBI" id="CHEBI:29035"/>
    </cofactor>
    <text evidence="1">Binds 2 manganese ions per subunit.</text>
</comment>
<comment type="subcellular location">
    <subcellularLocation>
        <location evidence="1">Cytoplasm</location>
    </subcellularLocation>
</comment>
<comment type="similarity">
    <text evidence="1">Belongs to the peptidase M17 family.</text>
</comment>
<gene>
    <name evidence="1" type="primary">pepA</name>
    <name type="ordered locus">PD_0106</name>
</gene>
<sequence>MALQFQLNQTTPQTVTTDCVIVGIYADKTLSPTAKTLDAASGGRITALTARGDLTGKSGTSALLHDLNGVTAPRVLVVGLGEADKFGAGQYIKAVGNAVRALKDAPVTHALLTLSELPVKDRNAAWNIHQAVIAADHAAYRYTATLGTSRKKAEESGLITLAIHGQETSGLTLGQAIAEGVEYARALGNLPPNICTPAYLAETTAHFAATHPGATCEILDESNMEALGMGALLAVARGSANRPRLIVLKWNGGGDARPYVLVGKGITFDTGGVNLKTQGGIEEMKYDMCGGAAVIGTFVAAVKVRLPLNLIVIVPAVENAIDGNAYRPSDVITSMSGKTIEVGNTDAEGRLILCDALTYAERFKPEALIDVATLTGACMIALGRAATGLMTHHDDLANELLTAGEHVHDRAWRLPLWDEYQGLLDSTFADVYNIGGRWGGAITAGCFLSRFTEGQRWAHLDIAGSASNEGKRGMATGRPVGLLTQWLVDRC</sequence>
<evidence type="ECO:0000255" key="1">
    <source>
        <dbReference type="HAMAP-Rule" id="MF_00181"/>
    </source>
</evidence>
<dbReference type="EC" id="3.4.11.1" evidence="1"/>
<dbReference type="EC" id="3.4.11.10" evidence="1"/>
<dbReference type="EMBL" id="AE009442">
    <property type="protein sequence ID" value="AAO28005.1"/>
    <property type="molecule type" value="Genomic_DNA"/>
</dbReference>
<dbReference type="RefSeq" id="WP_004087599.1">
    <property type="nucleotide sequence ID" value="NC_004556.1"/>
</dbReference>
<dbReference type="SMR" id="Q87F32"/>
<dbReference type="MEROPS" id="M17.003"/>
<dbReference type="KEGG" id="xft:PD_0106"/>
<dbReference type="HOGENOM" id="CLU_013734_2_2_6"/>
<dbReference type="Proteomes" id="UP000002516">
    <property type="component" value="Chromosome"/>
</dbReference>
<dbReference type="GO" id="GO:0005737">
    <property type="term" value="C:cytoplasm"/>
    <property type="evidence" value="ECO:0007669"/>
    <property type="project" value="UniProtKB-SubCell"/>
</dbReference>
<dbReference type="GO" id="GO:0030145">
    <property type="term" value="F:manganese ion binding"/>
    <property type="evidence" value="ECO:0007669"/>
    <property type="project" value="UniProtKB-UniRule"/>
</dbReference>
<dbReference type="GO" id="GO:0070006">
    <property type="term" value="F:metalloaminopeptidase activity"/>
    <property type="evidence" value="ECO:0007669"/>
    <property type="project" value="InterPro"/>
</dbReference>
<dbReference type="GO" id="GO:0006508">
    <property type="term" value="P:proteolysis"/>
    <property type="evidence" value="ECO:0007669"/>
    <property type="project" value="UniProtKB-KW"/>
</dbReference>
<dbReference type="CDD" id="cd00433">
    <property type="entry name" value="Peptidase_M17"/>
    <property type="match status" value="1"/>
</dbReference>
<dbReference type="Gene3D" id="3.40.220.10">
    <property type="entry name" value="Leucine Aminopeptidase, subunit E, domain 1"/>
    <property type="match status" value="1"/>
</dbReference>
<dbReference type="Gene3D" id="3.40.630.10">
    <property type="entry name" value="Zn peptidases"/>
    <property type="match status" value="1"/>
</dbReference>
<dbReference type="HAMAP" id="MF_00181">
    <property type="entry name" value="Cytosol_peptidase_M17"/>
    <property type="match status" value="1"/>
</dbReference>
<dbReference type="InterPro" id="IPR011356">
    <property type="entry name" value="Leucine_aapep/pepB"/>
</dbReference>
<dbReference type="InterPro" id="IPR043472">
    <property type="entry name" value="Macro_dom-like"/>
</dbReference>
<dbReference type="InterPro" id="IPR000819">
    <property type="entry name" value="Peptidase_M17_C"/>
</dbReference>
<dbReference type="InterPro" id="IPR023042">
    <property type="entry name" value="Peptidase_M17_leu_NH2_pept"/>
</dbReference>
<dbReference type="InterPro" id="IPR008283">
    <property type="entry name" value="Peptidase_M17_N"/>
</dbReference>
<dbReference type="NCBIfam" id="NF002074">
    <property type="entry name" value="PRK00913.1-4"/>
    <property type="match status" value="1"/>
</dbReference>
<dbReference type="PANTHER" id="PTHR11963:SF23">
    <property type="entry name" value="CYTOSOL AMINOPEPTIDASE"/>
    <property type="match status" value="1"/>
</dbReference>
<dbReference type="PANTHER" id="PTHR11963">
    <property type="entry name" value="LEUCINE AMINOPEPTIDASE-RELATED"/>
    <property type="match status" value="1"/>
</dbReference>
<dbReference type="Pfam" id="PF00883">
    <property type="entry name" value="Peptidase_M17"/>
    <property type="match status" value="1"/>
</dbReference>
<dbReference type="Pfam" id="PF02789">
    <property type="entry name" value="Peptidase_M17_N"/>
    <property type="match status" value="1"/>
</dbReference>
<dbReference type="PRINTS" id="PR00481">
    <property type="entry name" value="LAMNOPPTDASE"/>
</dbReference>
<dbReference type="SUPFAM" id="SSF52949">
    <property type="entry name" value="Macro domain-like"/>
    <property type="match status" value="1"/>
</dbReference>
<dbReference type="SUPFAM" id="SSF53187">
    <property type="entry name" value="Zn-dependent exopeptidases"/>
    <property type="match status" value="1"/>
</dbReference>
<dbReference type="PROSITE" id="PS00631">
    <property type="entry name" value="CYTOSOL_AP"/>
    <property type="match status" value="1"/>
</dbReference>
<protein>
    <recommendedName>
        <fullName evidence="1">Probable cytosol aminopeptidase</fullName>
        <ecNumber evidence="1">3.4.11.1</ecNumber>
    </recommendedName>
    <alternativeName>
        <fullName evidence="1">Leucine aminopeptidase</fullName>
        <shortName evidence="1">LAP</shortName>
        <ecNumber evidence="1">3.4.11.10</ecNumber>
    </alternativeName>
    <alternativeName>
        <fullName evidence="1">Leucyl aminopeptidase</fullName>
    </alternativeName>
</protein>
<accession>Q87F32</accession>
<proteinExistence type="inferred from homology"/>
<organism>
    <name type="scientific">Xylella fastidiosa (strain Temecula1 / ATCC 700964)</name>
    <dbReference type="NCBI Taxonomy" id="183190"/>
    <lineage>
        <taxon>Bacteria</taxon>
        <taxon>Pseudomonadati</taxon>
        <taxon>Pseudomonadota</taxon>
        <taxon>Gammaproteobacteria</taxon>
        <taxon>Lysobacterales</taxon>
        <taxon>Lysobacteraceae</taxon>
        <taxon>Xylella</taxon>
    </lineage>
</organism>
<feature type="chain" id="PRO_0000165819" description="Probable cytosol aminopeptidase">
    <location>
        <begin position="1"/>
        <end position="491"/>
    </location>
</feature>
<feature type="active site" evidence="1">
    <location>
        <position position="276"/>
    </location>
</feature>
<feature type="active site" evidence="1">
    <location>
        <position position="350"/>
    </location>
</feature>
<feature type="binding site" evidence="1">
    <location>
        <position position="264"/>
    </location>
    <ligand>
        <name>Mn(2+)</name>
        <dbReference type="ChEBI" id="CHEBI:29035"/>
        <label>2</label>
    </ligand>
</feature>
<feature type="binding site" evidence="1">
    <location>
        <position position="269"/>
    </location>
    <ligand>
        <name>Mn(2+)</name>
        <dbReference type="ChEBI" id="CHEBI:29035"/>
        <label>1</label>
    </ligand>
</feature>
<feature type="binding site" evidence="1">
    <location>
        <position position="269"/>
    </location>
    <ligand>
        <name>Mn(2+)</name>
        <dbReference type="ChEBI" id="CHEBI:29035"/>
        <label>2</label>
    </ligand>
</feature>
<feature type="binding site" evidence="1">
    <location>
        <position position="287"/>
    </location>
    <ligand>
        <name>Mn(2+)</name>
        <dbReference type="ChEBI" id="CHEBI:29035"/>
        <label>2</label>
    </ligand>
</feature>
<feature type="binding site" evidence="1">
    <location>
        <position position="346"/>
    </location>
    <ligand>
        <name>Mn(2+)</name>
        <dbReference type="ChEBI" id="CHEBI:29035"/>
        <label>1</label>
    </ligand>
</feature>
<feature type="binding site" evidence="1">
    <location>
        <position position="348"/>
    </location>
    <ligand>
        <name>Mn(2+)</name>
        <dbReference type="ChEBI" id="CHEBI:29035"/>
        <label>1</label>
    </ligand>
</feature>
<feature type="binding site" evidence="1">
    <location>
        <position position="348"/>
    </location>
    <ligand>
        <name>Mn(2+)</name>
        <dbReference type="ChEBI" id="CHEBI:29035"/>
        <label>2</label>
    </ligand>
</feature>
<keyword id="KW-0031">Aminopeptidase</keyword>
<keyword id="KW-0963">Cytoplasm</keyword>
<keyword id="KW-0378">Hydrolase</keyword>
<keyword id="KW-0464">Manganese</keyword>
<keyword id="KW-0479">Metal-binding</keyword>
<keyword id="KW-0645">Protease</keyword>
<keyword id="KW-1185">Reference proteome</keyword>
<name>AMPA_XYLFT</name>
<reference key="1">
    <citation type="journal article" date="2003" name="J. Bacteriol.">
        <title>Comparative analyses of the complete genome sequences of Pierce's disease and citrus variegated chlorosis strains of Xylella fastidiosa.</title>
        <authorList>
            <person name="Van Sluys M.A."/>
            <person name="de Oliveira M.C."/>
            <person name="Monteiro-Vitorello C.B."/>
            <person name="Miyaki C.Y."/>
            <person name="Furlan L.R."/>
            <person name="Camargo L.E.A."/>
            <person name="da Silva A.C.R."/>
            <person name="Moon D.H."/>
            <person name="Takita M.A."/>
            <person name="Lemos E.G.M."/>
            <person name="Machado M.A."/>
            <person name="Ferro M.I.T."/>
            <person name="da Silva F.R."/>
            <person name="Goldman M.H.S."/>
            <person name="Goldman G.H."/>
            <person name="Lemos M.V.F."/>
            <person name="El-Dorry H."/>
            <person name="Tsai S.M."/>
            <person name="Carrer H."/>
            <person name="Carraro D.M."/>
            <person name="de Oliveira R.C."/>
            <person name="Nunes L.R."/>
            <person name="Siqueira W.J."/>
            <person name="Coutinho L.L."/>
            <person name="Kimura E.T."/>
            <person name="Ferro E.S."/>
            <person name="Harakava R."/>
            <person name="Kuramae E.E."/>
            <person name="Marino C.L."/>
            <person name="Giglioti E."/>
            <person name="Abreu I.L."/>
            <person name="Alves L.M.C."/>
            <person name="do Amaral A.M."/>
            <person name="Baia G.S."/>
            <person name="Blanco S.R."/>
            <person name="Brito M.S."/>
            <person name="Cannavan F.S."/>
            <person name="Celestino A.V."/>
            <person name="da Cunha A.F."/>
            <person name="Fenille R.C."/>
            <person name="Ferro J.A."/>
            <person name="Formighieri E.F."/>
            <person name="Kishi L.T."/>
            <person name="Leoni S.G."/>
            <person name="Oliveira A.R."/>
            <person name="Rosa V.E. Jr."/>
            <person name="Sassaki F.T."/>
            <person name="Sena J.A.D."/>
            <person name="de Souza A.A."/>
            <person name="Truffi D."/>
            <person name="Tsukumo F."/>
            <person name="Yanai G.M."/>
            <person name="Zaros L.G."/>
            <person name="Civerolo E.L."/>
            <person name="Simpson A.J.G."/>
            <person name="Almeida N.F. Jr."/>
            <person name="Setubal J.C."/>
            <person name="Kitajima J.P."/>
        </authorList>
    </citation>
    <scope>NUCLEOTIDE SEQUENCE [LARGE SCALE GENOMIC DNA]</scope>
    <source>
        <strain>Temecula1 / ATCC 700964</strain>
    </source>
</reference>